<feature type="chain" id="PRO_0000382118" description="ATP synthase subunit delta">
    <location>
        <begin position="1"/>
        <end position="184"/>
    </location>
</feature>
<organism>
    <name type="scientific">Paramagnetospirillum magneticum (strain ATCC 700264 / AMB-1)</name>
    <name type="common">Magnetospirillum magneticum</name>
    <dbReference type="NCBI Taxonomy" id="342108"/>
    <lineage>
        <taxon>Bacteria</taxon>
        <taxon>Pseudomonadati</taxon>
        <taxon>Pseudomonadota</taxon>
        <taxon>Alphaproteobacteria</taxon>
        <taxon>Rhodospirillales</taxon>
        <taxon>Magnetospirillaceae</taxon>
        <taxon>Paramagnetospirillum</taxon>
    </lineage>
</organism>
<comment type="function">
    <text evidence="1">F(1)F(0) ATP synthase produces ATP from ADP in the presence of a proton or sodium gradient. F-type ATPases consist of two structural domains, F(1) containing the extramembraneous catalytic core and F(0) containing the membrane proton channel, linked together by a central stalk and a peripheral stalk. During catalysis, ATP synthesis in the catalytic domain of F(1) is coupled via a rotary mechanism of the central stalk subunits to proton translocation.</text>
</comment>
<comment type="function">
    <text evidence="1">This protein is part of the stalk that links CF(0) to CF(1). It either transmits conformational changes from CF(0) to CF(1) or is implicated in proton conduction.</text>
</comment>
<comment type="subunit">
    <text evidence="1">F-type ATPases have 2 components, F(1) - the catalytic core - and F(0) - the membrane proton channel. F(1) has five subunits: alpha(3), beta(3), gamma(1), delta(1), epsilon(1). F(0) has three main subunits: a(1), b(2) and c(10-14). The alpha and beta chains form an alternating ring which encloses part of the gamma chain. F(1) is attached to F(0) by a central stalk formed by the gamma and epsilon chains, while a peripheral stalk is formed by the delta and b chains.</text>
</comment>
<comment type="subcellular location">
    <subcellularLocation>
        <location evidence="1">Cell inner membrane</location>
        <topology evidence="1">Peripheral membrane protein</topology>
    </subcellularLocation>
</comment>
<comment type="similarity">
    <text evidence="1">Belongs to the ATPase delta chain family.</text>
</comment>
<protein>
    <recommendedName>
        <fullName evidence="1">ATP synthase subunit delta</fullName>
    </recommendedName>
    <alternativeName>
        <fullName evidence="1">ATP synthase F(1) sector subunit delta</fullName>
    </alternativeName>
    <alternativeName>
        <fullName evidence="1">F-type ATPase subunit delta</fullName>
        <shortName evidence="1">F-ATPase subunit delta</shortName>
    </alternativeName>
</protein>
<accession>Q2VZM9</accession>
<proteinExistence type="inferred from homology"/>
<dbReference type="EMBL" id="AP007255">
    <property type="protein sequence ID" value="BAE52946.1"/>
    <property type="molecule type" value="Genomic_DNA"/>
</dbReference>
<dbReference type="RefSeq" id="WP_011386491.1">
    <property type="nucleotide sequence ID" value="NC_007626.1"/>
</dbReference>
<dbReference type="SMR" id="Q2VZM9"/>
<dbReference type="STRING" id="342108.amb4142"/>
<dbReference type="KEGG" id="mag:amb4142"/>
<dbReference type="HOGENOM" id="CLU_085114_0_1_5"/>
<dbReference type="OrthoDB" id="9796185at2"/>
<dbReference type="Proteomes" id="UP000007058">
    <property type="component" value="Chromosome"/>
</dbReference>
<dbReference type="GO" id="GO:0005886">
    <property type="term" value="C:plasma membrane"/>
    <property type="evidence" value="ECO:0007669"/>
    <property type="project" value="UniProtKB-SubCell"/>
</dbReference>
<dbReference type="GO" id="GO:0045259">
    <property type="term" value="C:proton-transporting ATP synthase complex"/>
    <property type="evidence" value="ECO:0007669"/>
    <property type="project" value="UniProtKB-KW"/>
</dbReference>
<dbReference type="GO" id="GO:0046933">
    <property type="term" value="F:proton-transporting ATP synthase activity, rotational mechanism"/>
    <property type="evidence" value="ECO:0007669"/>
    <property type="project" value="UniProtKB-UniRule"/>
</dbReference>
<dbReference type="Gene3D" id="1.10.520.20">
    <property type="entry name" value="N-terminal domain of the delta subunit of the F1F0-ATP synthase"/>
    <property type="match status" value="1"/>
</dbReference>
<dbReference type="HAMAP" id="MF_01416">
    <property type="entry name" value="ATP_synth_delta_bact"/>
    <property type="match status" value="1"/>
</dbReference>
<dbReference type="InterPro" id="IPR026015">
    <property type="entry name" value="ATP_synth_OSCP/delta_N_sf"/>
</dbReference>
<dbReference type="InterPro" id="IPR020781">
    <property type="entry name" value="ATPase_OSCP/d_CS"/>
</dbReference>
<dbReference type="InterPro" id="IPR000711">
    <property type="entry name" value="ATPase_OSCP/dsu"/>
</dbReference>
<dbReference type="NCBIfam" id="TIGR01145">
    <property type="entry name" value="ATP_synt_delta"/>
    <property type="match status" value="1"/>
</dbReference>
<dbReference type="NCBIfam" id="NF004406">
    <property type="entry name" value="PRK05758.3-2"/>
    <property type="match status" value="1"/>
</dbReference>
<dbReference type="PANTHER" id="PTHR11910">
    <property type="entry name" value="ATP SYNTHASE DELTA CHAIN"/>
    <property type="match status" value="1"/>
</dbReference>
<dbReference type="Pfam" id="PF00213">
    <property type="entry name" value="OSCP"/>
    <property type="match status" value="1"/>
</dbReference>
<dbReference type="PRINTS" id="PR00125">
    <property type="entry name" value="ATPASEDELTA"/>
</dbReference>
<dbReference type="SUPFAM" id="SSF47928">
    <property type="entry name" value="N-terminal domain of the delta subunit of the F1F0-ATP synthase"/>
    <property type="match status" value="1"/>
</dbReference>
<dbReference type="PROSITE" id="PS00389">
    <property type="entry name" value="ATPASE_DELTA"/>
    <property type="match status" value="1"/>
</dbReference>
<reference key="1">
    <citation type="journal article" date="2005" name="DNA Res.">
        <title>Complete genome sequence of the facultative anaerobic magnetotactic bacterium Magnetospirillum sp. strain AMB-1.</title>
        <authorList>
            <person name="Matsunaga T."/>
            <person name="Okamura Y."/>
            <person name="Fukuda Y."/>
            <person name="Wahyudi A.T."/>
            <person name="Murase Y."/>
            <person name="Takeyama H."/>
        </authorList>
    </citation>
    <scope>NUCLEOTIDE SEQUENCE [LARGE SCALE GENOMIC DNA]</scope>
    <source>
        <strain>ATCC 700264 / AMB-1</strain>
    </source>
</reference>
<name>ATPD_PARM1</name>
<evidence type="ECO:0000255" key="1">
    <source>
        <dbReference type="HAMAP-Rule" id="MF_01416"/>
    </source>
</evidence>
<gene>
    <name evidence="1" type="primary">atpH</name>
    <name type="ordered locus">amb4142</name>
</gene>
<sequence length="184" mass="19088">MPSETIGVIADRYATALFELADSSGSLDQVAGDLKTLQAMLRESADLRRVVDSPVLSRNDQGKAISAVAKAAGFSELTNKFLGLAAQNRRLHTLSGVIASYLGRLAARRGEKSATVASAVALSPAQQDALTTALKAAFGGNVAVDVKVDPSLLGGLVVQVGSRMVDSSLKTKLQHLKLAMKGVG</sequence>
<keyword id="KW-0066">ATP synthesis</keyword>
<keyword id="KW-0997">Cell inner membrane</keyword>
<keyword id="KW-1003">Cell membrane</keyword>
<keyword id="KW-0139">CF(1)</keyword>
<keyword id="KW-0375">Hydrogen ion transport</keyword>
<keyword id="KW-0406">Ion transport</keyword>
<keyword id="KW-0472">Membrane</keyword>
<keyword id="KW-0813">Transport</keyword>